<feature type="chain" id="PRO_0000216672" description="UPF0223 protein BCE_4008">
    <location>
        <begin position="1"/>
        <end position="89"/>
    </location>
</feature>
<comment type="similarity">
    <text evidence="1">Belongs to the UPF0223 family.</text>
</comment>
<comment type="sequence caution" evidence="2">
    <conflict type="erroneous initiation">
        <sequence resource="EMBL-CDS" id="AAS42911"/>
    </conflict>
</comment>
<dbReference type="EMBL" id="AE017194">
    <property type="protein sequence ID" value="AAS42911.1"/>
    <property type="status" value="ALT_INIT"/>
    <property type="molecule type" value="Genomic_DNA"/>
</dbReference>
<dbReference type="SMR" id="Q732A6"/>
<dbReference type="KEGG" id="bca:BCE_4008"/>
<dbReference type="HOGENOM" id="CLU_166693_0_0_9"/>
<dbReference type="Proteomes" id="UP000002527">
    <property type="component" value="Chromosome"/>
</dbReference>
<dbReference type="Gene3D" id="1.10.220.80">
    <property type="entry name" value="BH2638-like"/>
    <property type="match status" value="1"/>
</dbReference>
<dbReference type="HAMAP" id="MF_01041">
    <property type="entry name" value="UPF0223"/>
    <property type="match status" value="1"/>
</dbReference>
<dbReference type="InterPro" id="IPR023324">
    <property type="entry name" value="BH2638-like_sf"/>
</dbReference>
<dbReference type="InterPro" id="IPR007920">
    <property type="entry name" value="UPF0223"/>
</dbReference>
<dbReference type="NCBIfam" id="NF003353">
    <property type="entry name" value="PRK04387.1"/>
    <property type="match status" value="1"/>
</dbReference>
<dbReference type="Pfam" id="PF05256">
    <property type="entry name" value="UPF0223"/>
    <property type="match status" value="1"/>
</dbReference>
<dbReference type="PIRSF" id="PIRSF037260">
    <property type="entry name" value="UPF0223"/>
    <property type="match status" value="1"/>
</dbReference>
<dbReference type="SUPFAM" id="SSF158504">
    <property type="entry name" value="BH2638-like"/>
    <property type="match status" value="1"/>
</dbReference>
<accession>Q732A6</accession>
<sequence length="89" mass="10800">MEYQYPLDYDWSNEEMVTIVKFYEAIEKAYEKGIVREELMGLYRRFKEIVPSKAEEKKIDKEFQEVSGYSIYRAIQKAKEIEEEKLVKM</sequence>
<proteinExistence type="inferred from homology"/>
<evidence type="ECO:0000255" key="1">
    <source>
        <dbReference type="HAMAP-Rule" id="MF_01041"/>
    </source>
</evidence>
<evidence type="ECO:0000305" key="2"/>
<organism>
    <name type="scientific">Bacillus cereus (strain ATCC 10987 / NRS 248)</name>
    <dbReference type="NCBI Taxonomy" id="222523"/>
    <lineage>
        <taxon>Bacteria</taxon>
        <taxon>Bacillati</taxon>
        <taxon>Bacillota</taxon>
        <taxon>Bacilli</taxon>
        <taxon>Bacillales</taxon>
        <taxon>Bacillaceae</taxon>
        <taxon>Bacillus</taxon>
        <taxon>Bacillus cereus group</taxon>
    </lineage>
</organism>
<gene>
    <name type="ordered locus">BCE_4008</name>
</gene>
<name>Y4008_BACC1</name>
<protein>
    <recommendedName>
        <fullName evidence="1">UPF0223 protein BCE_4008</fullName>
    </recommendedName>
</protein>
<reference key="1">
    <citation type="journal article" date="2004" name="Nucleic Acids Res.">
        <title>The genome sequence of Bacillus cereus ATCC 10987 reveals metabolic adaptations and a large plasmid related to Bacillus anthracis pXO1.</title>
        <authorList>
            <person name="Rasko D.A."/>
            <person name="Ravel J."/>
            <person name="Oekstad O.A."/>
            <person name="Helgason E."/>
            <person name="Cer R.Z."/>
            <person name="Jiang L."/>
            <person name="Shores K.A."/>
            <person name="Fouts D.E."/>
            <person name="Tourasse N.J."/>
            <person name="Angiuoli S.V."/>
            <person name="Kolonay J.F."/>
            <person name="Nelson W.C."/>
            <person name="Kolstoe A.-B."/>
            <person name="Fraser C.M."/>
            <person name="Read T.D."/>
        </authorList>
    </citation>
    <scope>NUCLEOTIDE SEQUENCE [LARGE SCALE GENOMIC DNA]</scope>
    <source>
        <strain>ATCC 10987 / NRS 248</strain>
    </source>
</reference>